<comment type="function">
    <text evidence="1">Catalyzes the last two sequential reactions in the de novo biosynthetic pathway for UDP-N-acetylglucosamine (UDP-GlcNAc). The C-terminal domain catalyzes the transfer of acetyl group from acetyl coenzyme A to glucosamine-1-phosphate (GlcN-1-P) to produce N-acetylglucosamine-1-phosphate (GlcNAc-1-P), which is converted into UDP-GlcNAc by the transfer of uridine 5-monophosphate (from uridine 5-triphosphate), a reaction catalyzed by the N-terminal domain.</text>
</comment>
<comment type="catalytic activity">
    <reaction evidence="1">
        <text>alpha-D-glucosamine 1-phosphate + acetyl-CoA = N-acetyl-alpha-D-glucosamine 1-phosphate + CoA + H(+)</text>
        <dbReference type="Rhea" id="RHEA:13725"/>
        <dbReference type="ChEBI" id="CHEBI:15378"/>
        <dbReference type="ChEBI" id="CHEBI:57287"/>
        <dbReference type="ChEBI" id="CHEBI:57288"/>
        <dbReference type="ChEBI" id="CHEBI:57776"/>
        <dbReference type="ChEBI" id="CHEBI:58516"/>
        <dbReference type="EC" id="2.3.1.157"/>
    </reaction>
</comment>
<comment type="catalytic activity">
    <reaction evidence="1">
        <text>N-acetyl-alpha-D-glucosamine 1-phosphate + UTP + H(+) = UDP-N-acetyl-alpha-D-glucosamine + diphosphate</text>
        <dbReference type="Rhea" id="RHEA:13509"/>
        <dbReference type="ChEBI" id="CHEBI:15378"/>
        <dbReference type="ChEBI" id="CHEBI:33019"/>
        <dbReference type="ChEBI" id="CHEBI:46398"/>
        <dbReference type="ChEBI" id="CHEBI:57705"/>
        <dbReference type="ChEBI" id="CHEBI:57776"/>
        <dbReference type="EC" id="2.7.7.23"/>
    </reaction>
</comment>
<comment type="cofactor">
    <cofactor evidence="1">
        <name>Mg(2+)</name>
        <dbReference type="ChEBI" id="CHEBI:18420"/>
    </cofactor>
    <text evidence="1">Binds 1 Mg(2+) ion per subunit.</text>
</comment>
<comment type="pathway">
    <text evidence="1">Nucleotide-sugar biosynthesis; UDP-N-acetyl-alpha-D-glucosamine biosynthesis; N-acetyl-alpha-D-glucosamine 1-phosphate from alpha-D-glucosamine 6-phosphate (route II): step 2/2.</text>
</comment>
<comment type="pathway">
    <text evidence="1">Nucleotide-sugar biosynthesis; UDP-N-acetyl-alpha-D-glucosamine biosynthesis; UDP-N-acetyl-alpha-D-glucosamine from N-acetyl-alpha-D-glucosamine 1-phosphate: step 1/1.</text>
</comment>
<comment type="pathway">
    <text evidence="1">Bacterial outer membrane biogenesis; LPS lipid A biosynthesis.</text>
</comment>
<comment type="subunit">
    <text evidence="1">Homotrimer.</text>
</comment>
<comment type="subcellular location">
    <subcellularLocation>
        <location evidence="1">Cytoplasm</location>
    </subcellularLocation>
</comment>
<comment type="similarity">
    <text evidence="1">In the N-terminal section; belongs to the N-acetylglucosamine-1-phosphate uridyltransferase family.</text>
</comment>
<comment type="similarity">
    <text evidence="1">In the C-terminal section; belongs to the transferase hexapeptide repeat family.</text>
</comment>
<keyword id="KW-0012">Acyltransferase</keyword>
<keyword id="KW-0133">Cell shape</keyword>
<keyword id="KW-0961">Cell wall biogenesis/degradation</keyword>
<keyword id="KW-0963">Cytoplasm</keyword>
<keyword id="KW-0460">Magnesium</keyword>
<keyword id="KW-0479">Metal-binding</keyword>
<keyword id="KW-0511">Multifunctional enzyme</keyword>
<keyword id="KW-0548">Nucleotidyltransferase</keyword>
<keyword id="KW-0573">Peptidoglycan synthesis</keyword>
<keyword id="KW-0677">Repeat</keyword>
<keyword id="KW-0808">Transferase</keyword>
<protein>
    <recommendedName>
        <fullName evidence="1">Bifunctional protein GlmU</fullName>
    </recommendedName>
    <domain>
        <recommendedName>
            <fullName evidence="1">UDP-N-acetylglucosamine pyrophosphorylase</fullName>
            <ecNumber evidence="1">2.7.7.23</ecNumber>
        </recommendedName>
        <alternativeName>
            <fullName evidence="1">N-acetylglucosamine-1-phosphate uridyltransferase</fullName>
        </alternativeName>
    </domain>
    <domain>
        <recommendedName>
            <fullName evidence="1">Glucosamine-1-phosphate N-acetyltransferase</fullName>
            <ecNumber evidence="1">2.3.1.157</ecNumber>
        </recommendedName>
    </domain>
</protein>
<organism>
    <name type="scientific">Pseudomonas putida (strain ATCC 700007 / DSM 6899 / JCM 31910 / BCRC 17059 / LMG 24140 / F1)</name>
    <dbReference type="NCBI Taxonomy" id="351746"/>
    <lineage>
        <taxon>Bacteria</taxon>
        <taxon>Pseudomonadati</taxon>
        <taxon>Pseudomonadota</taxon>
        <taxon>Gammaproteobacteria</taxon>
        <taxon>Pseudomonadales</taxon>
        <taxon>Pseudomonadaceae</taxon>
        <taxon>Pseudomonas</taxon>
    </lineage>
</organism>
<name>GLMU_PSEP1</name>
<accession>A5WBA1</accession>
<gene>
    <name evidence="1" type="primary">glmU</name>
    <name type="ordered locus">Pput_5293</name>
</gene>
<reference key="1">
    <citation type="submission" date="2007-05" db="EMBL/GenBank/DDBJ databases">
        <title>Complete sequence of Pseudomonas putida F1.</title>
        <authorList>
            <consortium name="US DOE Joint Genome Institute"/>
            <person name="Copeland A."/>
            <person name="Lucas S."/>
            <person name="Lapidus A."/>
            <person name="Barry K."/>
            <person name="Detter J.C."/>
            <person name="Glavina del Rio T."/>
            <person name="Hammon N."/>
            <person name="Israni S."/>
            <person name="Dalin E."/>
            <person name="Tice H."/>
            <person name="Pitluck S."/>
            <person name="Chain P."/>
            <person name="Malfatti S."/>
            <person name="Shin M."/>
            <person name="Vergez L."/>
            <person name="Schmutz J."/>
            <person name="Larimer F."/>
            <person name="Land M."/>
            <person name="Hauser L."/>
            <person name="Kyrpides N."/>
            <person name="Lykidis A."/>
            <person name="Parales R."/>
            <person name="Richardson P."/>
        </authorList>
    </citation>
    <scope>NUCLEOTIDE SEQUENCE [LARGE SCALE GENOMIC DNA]</scope>
    <source>
        <strain>ATCC 700007 / DSM 6899 / JCM 31910 / BCRC 17059 / LMG 24140 / F1</strain>
    </source>
</reference>
<feature type="chain" id="PRO_1000056188" description="Bifunctional protein GlmU">
    <location>
        <begin position="1"/>
        <end position="455"/>
    </location>
</feature>
<feature type="region of interest" description="Pyrophosphorylase" evidence="1">
    <location>
        <begin position="1"/>
        <end position="226"/>
    </location>
</feature>
<feature type="region of interest" description="Linker" evidence="1">
    <location>
        <begin position="227"/>
        <end position="247"/>
    </location>
</feature>
<feature type="region of interest" description="N-acetyltransferase" evidence="1">
    <location>
        <begin position="248"/>
        <end position="455"/>
    </location>
</feature>
<feature type="active site" description="Proton acceptor" evidence="1">
    <location>
        <position position="360"/>
    </location>
</feature>
<feature type="binding site" evidence="1">
    <location>
        <begin position="8"/>
        <end position="11"/>
    </location>
    <ligand>
        <name>UDP-N-acetyl-alpha-D-glucosamine</name>
        <dbReference type="ChEBI" id="CHEBI:57705"/>
    </ligand>
</feature>
<feature type="binding site" evidence="1">
    <location>
        <position position="22"/>
    </location>
    <ligand>
        <name>UDP-N-acetyl-alpha-D-glucosamine</name>
        <dbReference type="ChEBI" id="CHEBI:57705"/>
    </ligand>
</feature>
<feature type="binding site" evidence="1">
    <location>
        <position position="73"/>
    </location>
    <ligand>
        <name>UDP-N-acetyl-alpha-D-glucosamine</name>
        <dbReference type="ChEBI" id="CHEBI:57705"/>
    </ligand>
</feature>
<feature type="binding site" evidence="1">
    <location>
        <begin position="78"/>
        <end position="79"/>
    </location>
    <ligand>
        <name>UDP-N-acetyl-alpha-D-glucosamine</name>
        <dbReference type="ChEBI" id="CHEBI:57705"/>
    </ligand>
</feature>
<feature type="binding site" evidence="1">
    <location>
        <begin position="99"/>
        <end position="101"/>
    </location>
    <ligand>
        <name>UDP-N-acetyl-alpha-D-glucosamine</name>
        <dbReference type="ChEBI" id="CHEBI:57705"/>
    </ligand>
</feature>
<feature type="binding site" evidence="1">
    <location>
        <position position="101"/>
    </location>
    <ligand>
        <name>Mg(2+)</name>
        <dbReference type="ChEBI" id="CHEBI:18420"/>
    </ligand>
</feature>
<feature type="binding site" evidence="1">
    <location>
        <position position="136"/>
    </location>
    <ligand>
        <name>UDP-N-acetyl-alpha-D-glucosamine</name>
        <dbReference type="ChEBI" id="CHEBI:57705"/>
    </ligand>
</feature>
<feature type="binding site" evidence="1">
    <location>
        <position position="151"/>
    </location>
    <ligand>
        <name>UDP-N-acetyl-alpha-D-glucosamine</name>
        <dbReference type="ChEBI" id="CHEBI:57705"/>
    </ligand>
</feature>
<feature type="binding site" evidence="1">
    <location>
        <position position="166"/>
    </location>
    <ligand>
        <name>UDP-N-acetyl-alpha-D-glucosamine</name>
        <dbReference type="ChEBI" id="CHEBI:57705"/>
    </ligand>
</feature>
<feature type="binding site" evidence="1">
    <location>
        <position position="224"/>
    </location>
    <ligand>
        <name>Mg(2+)</name>
        <dbReference type="ChEBI" id="CHEBI:18420"/>
    </ligand>
</feature>
<feature type="binding site" evidence="1">
    <location>
        <position position="224"/>
    </location>
    <ligand>
        <name>UDP-N-acetyl-alpha-D-glucosamine</name>
        <dbReference type="ChEBI" id="CHEBI:57705"/>
    </ligand>
</feature>
<feature type="binding site" evidence="1">
    <location>
        <position position="330"/>
    </location>
    <ligand>
        <name>UDP-N-acetyl-alpha-D-glucosamine</name>
        <dbReference type="ChEBI" id="CHEBI:57705"/>
    </ligand>
</feature>
<feature type="binding site" evidence="1">
    <location>
        <position position="348"/>
    </location>
    <ligand>
        <name>UDP-N-acetyl-alpha-D-glucosamine</name>
        <dbReference type="ChEBI" id="CHEBI:57705"/>
    </ligand>
</feature>
<feature type="binding site" evidence="1">
    <location>
        <position position="363"/>
    </location>
    <ligand>
        <name>UDP-N-acetyl-alpha-D-glucosamine</name>
        <dbReference type="ChEBI" id="CHEBI:57705"/>
    </ligand>
</feature>
<feature type="binding site" evidence="1">
    <location>
        <position position="374"/>
    </location>
    <ligand>
        <name>UDP-N-acetyl-alpha-D-glucosamine</name>
        <dbReference type="ChEBI" id="CHEBI:57705"/>
    </ligand>
</feature>
<feature type="binding site" evidence="1">
    <location>
        <position position="377"/>
    </location>
    <ligand>
        <name>acetyl-CoA</name>
        <dbReference type="ChEBI" id="CHEBI:57288"/>
    </ligand>
</feature>
<feature type="binding site" evidence="1">
    <location>
        <begin position="383"/>
        <end position="384"/>
    </location>
    <ligand>
        <name>acetyl-CoA</name>
        <dbReference type="ChEBI" id="CHEBI:57288"/>
    </ligand>
</feature>
<feature type="binding site" evidence="1">
    <location>
        <position position="402"/>
    </location>
    <ligand>
        <name>acetyl-CoA</name>
        <dbReference type="ChEBI" id="CHEBI:57288"/>
    </ligand>
</feature>
<feature type="binding site" evidence="1">
    <location>
        <position position="420"/>
    </location>
    <ligand>
        <name>acetyl-CoA</name>
        <dbReference type="ChEBI" id="CHEBI:57288"/>
    </ligand>
</feature>
<feature type="binding site" evidence="1">
    <location>
        <position position="437"/>
    </location>
    <ligand>
        <name>acetyl-CoA</name>
        <dbReference type="ChEBI" id="CHEBI:57288"/>
    </ligand>
</feature>
<sequence>MSLDIVILAAGQGTRMRSALPKVLHPVAGNSMLGHVIHSARQLQPQGIHVVIGHGAELVRERLAADDLNFVMQNKQLGTGHAVAQALPALTADTVLVLYGDVPLIEVETLQRLLAKANDQQLGLLTVTLDDPTGYGRIVRDEQGRVTAIVEHKDANDAQKAIKEGNTGILALPAARLADWMGRLSNNNAQGEYYLTDVIAMAVADGLVVATEQPHDAMEVQGANDRRQLSELERHYQLREGRRLMAQGVTLRDPARFDVRGEVSVGRDVLIDINVILEGKVVIEDDVQIGPNCVIKNTTLRKGAVVKANSHLEGAVMGEGSDAGPFARLRPGSVLDAKAHVGNFVELKNAHLGEGAKAGHLTYLGDAEIGARTNIGAGTITCNYDGANKFKTVMGEDVFIGSNNSLVAPVEIKAGATTAAGSTITQAVEAGDLAVARARQRNISGWKRPEKIKKS</sequence>
<proteinExistence type="inferred from homology"/>
<evidence type="ECO:0000255" key="1">
    <source>
        <dbReference type="HAMAP-Rule" id="MF_01631"/>
    </source>
</evidence>
<dbReference type="EC" id="2.7.7.23" evidence="1"/>
<dbReference type="EC" id="2.3.1.157" evidence="1"/>
<dbReference type="EMBL" id="CP000712">
    <property type="protein sequence ID" value="ABQ81411.1"/>
    <property type="molecule type" value="Genomic_DNA"/>
</dbReference>
<dbReference type="SMR" id="A5WBA1"/>
<dbReference type="KEGG" id="ppf:Pput_5293"/>
<dbReference type="eggNOG" id="COG1207">
    <property type="taxonomic scope" value="Bacteria"/>
</dbReference>
<dbReference type="HOGENOM" id="CLU_029499_15_2_6"/>
<dbReference type="UniPathway" id="UPA00113">
    <property type="reaction ID" value="UER00532"/>
</dbReference>
<dbReference type="UniPathway" id="UPA00113">
    <property type="reaction ID" value="UER00533"/>
</dbReference>
<dbReference type="UniPathway" id="UPA00973"/>
<dbReference type="GO" id="GO:0005737">
    <property type="term" value="C:cytoplasm"/>
    <property type="evidence" value="ECO:0007669"/>
    <property type="project" value="UniProtKB-SubCell"/>
</dbReference>
<dbReference type="GO" id="GO:0016020">
    <property type="term" value="C:membrane"/>
    <property type="evidence" value="ECO:0007669"/>
    <property type="project" value="GOC"/>
</dbReference>
<dbReference type="GO" id="GO:0019134">
    <property type="term" value="F:glucosamine-1-phosphate N-acetyltransferase activity"/>
    <property type="evidence" value="ECO:0007669"/>
    <property type="project" value="UniProtKB-UniRule"/>
</dbReference>
<dbReference type="GO" id="GO:0000287">
    <property type="term" value="F:magnesium ion binding"/>
    <property type="evidence" value="ECO:0007669"/>
    <property type="project" value="UniProtKB-UniRule"/>
</dbReference>
<dbReference type="GO" id="GO:0003977">
    <property type="term" value="F:UDP-N-acetylglucosamine diphosphorylase activity"/>
    <property type="evidence" value="ECO:0007669"/>
    <property type="project" value="UniProtKB-UniRule"/>
</dbReference>
<dbReference type="GO" id="GO:0000902">
    <property type="term" value="P:cell morphogenesis"/>
    <property type="evidence" value="ECO:0007669"/>
    <property type="project" value="UniProtKB-UniRule"/>
</dbReference>
<dbReference type="GO" id="GO:0071555">
    <property type="term" value="P:cell wall organization"/>
    <property type="evidence" value="ECO:0007669"/>
    <property type="project" value="UniProtKB-KW"/>
</dbReference>
<dbReference type="GO" id="GO:0009245">
    <property type="term" value="P:lipid A biosynthetic process"/>
    <property type="evidence" value="ECO:0007669"/>
    <property type="project" value="UniProtKB-UniRule"/>
</dbReference>
<dbReference type="GO" id="GO:0009252">
    <property type="term" value="P:peptidoglycan biosynthetic process"/>
    <property type="evidence" value="ECO:0007669"/>
    <property type="project" value="UniProtKB-UniRule"/>
</dbReference>
<dbReference type="GO" id="GO:0008360">
    <property type="term" value="P:regulation of cell shape"/>
    <property type="evidence" value="ECO:0007669"/>
    <property type="project" value="UniProtKB-KW"/>
</dbReference>
<dbReference type="GO" id="GO:0006048">
    <property type="term" value="P:UDP-N-acetylglucosamine biosynthetic process"/>
    <property type="evidence" value="ECO:0007669"/>
    <property type="project" value="UniProtKB-UniPathway"/>
</dbReference>
<dbReference type="CDD" id="cd02540">
    <property type="entry name" value="GT2_GlmU_N_bac"/>
    <property type="match status" value="1"/>
</dbReference>
<dbReference type="CDD" id="cd03353">
    <property type="entry name" value="LbH_GlmU_C"/>
    <property type="match status" value="1"/>
</dbReference>
<dbReference type="Gene3D" id="2.160.10.10">
    <property type="entry name" value="Hexapeptide repeat proteins"/>
    <property type="match status" value="1"/>
</dbReference>
<dbReference type="Gene3D" id="3.90.550.10">
    <property type="entry name" value="Spore Coat Polysaccharide Biosynthesis Protein SpsA, Chain A"/>
    <property type="match status" value="1"/>
</dbReference>
<dbReference type="HAMAP" id="MF_01631">
    <property type="entry name" value="GlmU"/>
    <property type="match status" value="1"/>
</dbReference>
<dbReference type="InterPro" id="IPR005882">
    <property type="entry name" value="Bifunctional_GlmU"/>
</dbReference>
<dbReference type="InterPro" id="IPR050065">
    <property type="entry name" value="GlmU-like"/>
</dbReference>
<dbReference type="InterPro" id="IPR038009">
    <property type="entry name" value="GlmU_C_LbH"/>
</dbReference>
<dbReference type="InterPro" id="IPR001451">
    <property type="entry name" value="Hexapep"/>
</dbReference>
<dbReference type="InterPro" id="IPR025877">
    <property type="entry name" value="MobA-like_NTP_Trfase"/>
</dbReference>
<dbReference type="InterPro" id="IPR029044">
    <property type="entry name" value="Nucleotide-diphossugar_trans"/>
</dbReference>
<dbReference type="InterPro" id="IPR011004">
    <property type="entry name" value="Trimer_LpxA-like_sf"/>
</dbReference>
<dbReference type="NCBIfam" id="TIGR01173">
    <property type="entry name" value="glmU"/>
    <property type="match status" value="1"/>
</dbReference>
<dbReference type="PANTHER" id="PTHR43584:SF3">
    <property type="entry name" value="BIFUNCTIONAL PROTEIN GLMU"/>
    <property type="match status" value="1"/>
</dbReference>
<dbReference type="PANTHER" id="PTHR43584">
    <property type="entry name" value="NUCLEOTIDYL TRANSFERASE"/>
    <property type="match status" value="1"/>
</dbReference>
<dbReference type="Pfam" id="PF00132">
    <property type="entry name" value="Hexapep"/>
    <property type="match status" value="1"/>
</dbReference>
<dbReference type="Pfam" id="PF14602">
    <property type="entry name" value="Hexapep_2"/>
    <property type="match status" value="1"/>
</dbReference>
<dbReference type="Pfam" id="PF12804">
    <property type="entry name" value="NTP_transf_3"/>
    <property type="match status" value="1"/>
</dbReference>
<dbReference type="SUPFAM" id="SSF53448">
    <property type="entry name" value="Nucleotide-diphospho-sugar transferases"/>
    <property type="match status" value="1"/>
</dbReference>
<dbReference type="SUPFAM" id="SSF51161">
    <property type="entry name" value="Trimeric LpxA-like enzymes"/>
    <property type="match status" value="1"/>
</dbReference>